<proteinExistence type="inferred from homology"/>
<feature type="chain" id="PRO_0000321802" description="Adenylosuccinate synthetase">
    <location>
        <begin position="1"/>
        <end position="416"/>
    </location>
</feature>
<feature type="active site" description="Proton acceptor" evidence="1">
    <location>
        <position position="13"/>
    </location>
</feature>
<feature type="active site" description="Proton donor" evidence="1">
    <location>
        <position position="41"/>
    </location>
</feature>
<feature type="binding site" evidence="1">
    <location>
        <begin position="12"/>
        <end position="18"/>
    </location>
    <ligand>
        <name>GTP</name>
        <dbReference type="ChEBI" id="CHEBI:37565"/>
    </ligand>
</feature>
<feature type="binding site" description="in other chain" evidence="1">
    <location>
        <begin position="13"/>
        <end position="16"/>
    </location>
    <ligand>
        <name>IMP</name>
        <dbReference type="ChEBI" id="CHEBI:58053"/>
        <note>ligand shared between dimeric partners</note>
    </ligand>
</feature>
<feature type="binding site" evidence="1">
    <location>
        <position position="13"/>
    </location>
    <ligand>
        <name>Mg(2+)</name>
        <dbReference type="ChEBI" id="CHEBI:18420"/>
    </ligand>
</feature>
<feature type="binding site" description="in other chain" evidence="1">
    <location>
        <begin position="38"/>
        <end position="41"/>
    </location>
    <ligand>
        <name>IMP</name>
        <dbReference type="ChEBI" id="CHEBI:58053"/>
        <note>ligand shared between dimeric partners</note>
    </ligand>
</feature>
<feature type="binding site" evidence="1">
    <location>
        <begin position="40"/>
        <end position="42"/>
    </location>
    <ligand>
        <name>GTP</name>
        <dbReference type="ChEBI" id="CHEBI:37565"/>
    </ligand>
</feature>
<feature type="binding site" evidence="1">
    <location>
        <position position="40"/>
    </location>
    <ligand>
        <name>Mg(2+)</name>
        <dbReference type="ChEBI" id="CHEBI:18420"/>
    </ligand>
</feature>
<feature type="binding site" description="in other chain" evidence="1">
    <location>
        <position position="125"/>
    </location>
    <ligand>
        <name>IMP</name>
        <dbReference type="ChEBI" id="CHEBI:58053"/>
        <note>ligand shared between dimeric partners</note>
    </ligand>
</feature>
<feature type="binding site" evidence="1">
    <location>
        <position position="139"/>
    </location>
    <ligand>
        <name>IMP</name>
        <dbReference type="ChEBI" id="CHEBI:58053"/>
        <note>ligand shared between dimeric partners</note>
    </ligand>
</feature>
<feature type="binding site" description="in other chain" evidence="1">
    <location>
        <position position="220"/>
    </location>
    <ligand>
        <name>IMP</name>
        <dbReference type="ChEBI" id="CHEBI:58053"/>
        <note>ligand shared between dimeric partners</note>
    </ligand>
</feature>
<feature type="binding site" description="in other chain" evidence="1">
    <location>
        <position position="235"/>
    </location>
    <ligand>
        <name>IMP</name>
        <dbReference type="ChEBI" id="CHEBI:58053"/>
        <note>ligand shared between dimeric partners</note>
    </ligand>
</feature>
<feature type="binding site" evidence="1">
    <location>
        <begin position="295"/>
        <end position="301"/>
    </location>
    <ligand>
        <name>substrate</name>
    </ligand>
</feature>
<feature type="binding site" description="in other chain" evidence="1">
    <location>
        <position position="299"/>
    </location>
    <ligand>
        <name>IMP</name>
        <dbReference type="ChEBI" id="CHEBI:58053"/>
        <note>ligand shared between dimeric partners</note>
    </ligand>
</feature>
<feature type="binding site" evidence="1">
    <location>
        <position position="301"/>
    </location>
    <ligand>
        <name>GTP</name>
        <dbReference type="ChEBI" id="CHEBI:37565"/>
    </ligand>
</feature>
<feature type="binding site" evidence="1">
    <location>
        <begin position="327"/>
        <end position="329"/>
    </location>
    <ligand>
        <name>GTP</name>
        <dbReference type="ChEBI" id="CHEBI:37565"/>
    </ligand>
</feature>
<feature type="binding site" evidence="1">
    <location>
        <begin position="405"/>
        <end position="407"/>
    </location>
    <ligand>
        <name>GTP</name>
        <dbReference type="ChEBI" id="CHEBI:37565"/>
    </ligand>
</feature>
<accession>A6Q5H2</accession>
<reference key="1">
    <citation type="journal article" date="2007" name="Proc. Natl. Acad. Sci. U.S.A.">
        <title>Deep-sea vent epsilon-proteobacterial genomes provide insights into emergence of pathogens.</title>
        <authorList>
            <person name="Nakagawa S."/>
            <person name="Takaki Y."/>
            <person name="Shimamura S."/>
            <person name="Reysenbach A.-L."/>
            <person name="Takai K."/>
            <person name="Horikoshi K."/>
        </authorList>
    </citation>
    <scope>NUCLEOTIDE SEQUENCE [LARGE SCALE GENOMIC DNA]</scope>
    <source>
        <strain>SB155-2</strain>
    </source>
</reference>
<sequence>MAADLIVGIQWGDEGKGKIVDLLAQEYNVVCRYQGGHNAGHTIVVDGKTIALHLIPSGILNPKAVNIIGNGVVVSPAALLKEMEQFDNLDGRLLISDKAHLIFKYHEEIDRAKERLRGKNAIGTTGRGIGPAYSDKVSRQGHRIGELKDIDTLHKKILDYFETNKIYFEALGISFPSENELRMELQRYQEVLMPYVVDTTNYLWDLLELGEAKILLEGAQGTMLDIDHGTYPYVTSSNTIAAGACTGLGLAPKDIGKVIGIAKAYCTRVGNGPFPTEDNGEDGERLRKQGHEFGTTTGRPRRCGWFDAVAAKYASRINGCDEMALMKLDVLDGFEKIKVASKYLYEGEEIDYMVSDLENVEPIYLEFEGWDRVEGIRSWKDLPLNAKRYIEAIEELIETKISLISTSPDRADTIKR</sequence>
<keyword id="KW-0963">Cytoplasm</keyword>
<keyword id="KW-0342">GTP-binding</keyword>
<keyword id="KW-0436">Ligase</keyword>
<keyword id="KW-0460">Magnesium</keyword>
<keyword id="KW-0479">Metal-binding</keyword>
<keyword id="KW-0547">Nucleotide-binding</keyword>
<keyword id="KW-0658">Purine biosynthesis</keyword>
<keyword id="KW-1185">Reference proteome</keyword>
<evidence type="ECO:0000255" key="1">
    <source>
        <dbReference type="HAMAP-Rule" id="MF_00011"/>
    </source>
</evidence>
<gene>
    <name evidence="1" type="primary">purA</name>
    <name type="ordered locus">NIS_1625</name>
</gene>
<name>PURA_NITSB</name>
<dbReference type="EC" id="6.3.4.4" evidence="1"/>
<dbReference type="EMBL" id="AP009178">
    <property type="protein sequence ID" value="BAF70731.1"/>
    <property type="molecule type" value="Genomic_DNA"/>
</dbReference>
<dbReference type="SMR" id="A6Q5H2"/>
<dbReference type="FunCoup" id="A6Q5H2">
    <property type="interactions" value="484"/>
</dbReference>
<dbReference type="STRING" id="387092.NIS_1625"/>
<dbReference type="KEGG" id="nis:NIS_1625"/>
<dbReference type="eggNOG" id="COG0104">
    <property type="taxonomic scope" value="Bacteria"/>
</dbReference>
<dbReference type="HOGENOM" id="CLU_029848_0_0_7"/>
<dbReference type="InParanoid" id="A6Q5H2"/>
<dbReference type="OrthoDB" id="9807553at2"/>
<dbReference type="UniPathway" id="UPA00075">
    <property type="reaction ID" value="UER00335"/>
</dbReference>
<dbReference type="Proteomes" id="UP000001118">
    <property type="component" value="Chromosome"/>
</dbReference>
<dbReference type="GO" id="GO:0005737">
    <property type="term" value="C:cytoplasm"/>
    <property type="evidence" value="ECO:0007669"/>
    <property type="project" value="UniProtKB-SubCell"/>
</dbReference>
<dbReference type="GO" id="GO:0004019">
    <property type="term" value="F:adenylosuccinate synthase activity"/>
    <property type="evidence" value="ECO:0007669"/>
    <property type="project" value="UniProtKB-UniRule"/>
</dbReference>
<dbReference type="GO" id="GO:0005525">
    <property type="term" value="F:GTP binding"/>
    <property type="evidence" value="ECO:0007669"/>
    <property type="project" value="UniProtKB-UniRule"/>
</dbReference>
<dbReference type="GO" id="GO:0000287">
    <property type="term" value="F:magnesium ion binding"/>
    <property type="evidence" value="ECO:0007669"/>
    <property type="project" value="UniProtKB-UniRule"/>
</dbReference>
<dbReference type="GO" id="GO:0044208">
    <property type="term" value="P:'de novo' AMP biosynthetic process"/>
    <property type="evidence" value="ECO:0007669"/>
    <property type="project" value="UniProtKB-UniRule"/>
</dbReference>
<dbReference type="GO" id="GO:0046040">
    <property type="term" value="P:IMP metabolic process"/>
    <property type="evidence" value="ECO:0007669"/>
    <property type="project" value="TreeGrafter"/>
</dbReference>
<dbReference type="CDD" id="cd03108">
    <property type="entry name" value="AdSS"/>
    <property type="match status" value="1"/>
</dbReference>
<dbReference type="FunFam" id="1.10.300.10:FF:000001">
    <property type="entry name" value="Adenylosuccinate synthetase"/>
    <property type="match status" value="1"/>
</dbReference>
<dbReference type="FunFam" id="3.90.170.10:FF:000001">
    <property type="entry name" value="Adenylosuccinate synthetase"/>
    <property type="match status" value="1"/>
</dbReference>
<dbReference type="Gene3D" id="3.40.440.10">
    <property type="entry name" value="Adenylosuccinate Synthetase, subunit A, domain 1"/>
    <property type="match status" value="1"/>
</dbReference>
<dbReference type="Gene3D" id="1.10.300.10">
    <property type="entry name" value="Adenylosuccinate Synthetase, subunit A, domain 2"/>
    <property type="match status" value="1"/>
</dbReference>
<dbReference type="Gene3D" id="3.90.170.10">
    <property type="entry name" value="Adenylosuccinate Synthetase, subunit A, domain 3"/>
    <property type="match status" value="1"/>
</dbReference>
<dbReference type="HAMAP" id="MF_00011">
    <property type="entry name" value="Adenylosucc_synth"/>
    <property type="match status" value="1"/>
</dbReference>
<dbReference type="InterPro" id="IPR018220">
    <property type="entry name" value="Adenylosuccin_syn_GTP-bd"/>
</dbReference>
<dbReference type="InterPro" id="IPR033128">
    <property type="entry name" value="Adenylosuccin_syn_Lys_AS"/>
</dbReference>
<dbReference type="InterPro" id="IPR042109">
    <property type="entry name" value="Adenylosuccinate_synth_dom1"/>
</dbReference>
<dbReference type="InterPro" id="IPR042110">
    <property type="entry name" value="Adenylosuccinate_synth_dom2"/>
</dbReference>
<dbReference type="InterPro" id="IPR042111">
    <property type="entry name" value="Adenylosuccinate_synth_dom3"/>
</dbReference>
<dbReference type="InterPro" id="IPR001114">
    <property type="entry name" value="Adenylosuccinate_synthetase"/>
</dbReference>
<dbReference type="InterPro" id="IPR027417">
    <property type="entry name" value="P-loop_NTPase"/>
</dbReference>
<dbReference type="NCBIfam" id="NF002223">
    <property type="entry name" value="PRK01117.1"/>
    <property type="match status" value="1"/>
</dbReference>
<dbReference type="NCBIfam" id="TIGR00184">
    <property type="entry name" value="purA"/>
    <property type="match status" value="1"/>
</dbReference>
<dbReference type="PANTHER" id="PTHR11846">
    <property type="entry name" value="ADENYLOSUCCINATE SYNTHETASE"/>
    <property type="match status" value="1"/>
</dbReference>
<dbReference type="PANTHER" id="PTHR11846:SF0">
    <property type="entry name" value="ADENYLOSUCCINATE SYNTHETASE"/>
    <property type="match status" value="1"/>
</dbReference>
<dbReference type="Pfam" id="PF00709">
    <property type="entry name" value="Adenylsucc_synt"/>
    <property type="match status" value="1"/>
</dbReference>
<dbReference type="SMART" id="SM00788">
    <property type="entry name" value="Adenylsucc_synt"/>
    <property type="match status" value="1"/>
</dbReference>
<dbReference type="SUPFAM" id="SSF52540">
    <property type="entry name" value="P-loop containing nucleoside triphosphate hydrolases"/>
    <property type="match status" value="1"/>
</dbReference>
<dbReference type="PROSITE" id="PS01266">
    <property type="entry name" value="ADENYLOSUCCIN_SYN_1"/>
    <property type="match status" value="1"/>
</dbReference>
<dbReference type="PROSITE" id="PS00513">
    <property type="entry name" value="ADENYLOSUCCIN_SYN_2"/>
    <property type="match status" value="1"/>
</dbReference>
<organism>
    <name type="scientific">Nitratiruptor sp. (strain SB155-2)</name>
    <dbReference type="NCBI Taxonomy" id="387092"/>
    <lineage>
        <taxon>Bacteria</taxon>
        <taxon>Pseudomonadati</taxon>
        <taxon>Campylobacterota</taxon>
        <taxon>Epsilonproteobacteria</taxon>
        <taxon>Nautiliales</taxon>
        <taxon>Nitratiruptoraceae</taxon>
        <taxon>Nitratiruptor</taxon>
    </lineage>
</organism>
<protein>
    <recommendedName>
        <fullName evidence="1">Adenylosuccinate synthetase</fullName>
        <shortName evidence="1">AMPSase</shortName>
        <shortName evidence="1">AdSS</shortName>
        <ecNumber evidence="1">6.3.4.4</ecNumber>
    </recommendedName>
    <alternativeName>
        <fullName evidence="1">IMP--aspartate ligase</fullName>
    </alternativeName>
</protein>
<comment type="function">
    <text evidence="1">Plays an important role in the de novo pathway of purine nucleotide biosynthesis. Catalyzes the first committed step in the biosynthesis of AMP from IMP.</text>
</comment>
<comment type="catalytic activity">
    <reaction evidence="1">
        <text>IMP + L-aspartate + GTP = N(6)-(1,2-dicarboxyethyl)-AMP + GDP + phosphate + 2 H(+)</text>
        <dbReference type="Rhea" id="RHEA:15753"/>
        <dbReference type="ChEBI" id="CHEBI:15378"/>
        <dbReference type="ChEBI" id="CHEBI:29991"/>
        <dbReference type="ChEBI" id="CHEBI:37565"/>
        <dbReference type="ChEBI" id="CHEBI:43474"/>
        <dbReference type="ChEBI" id="CHEBI:57567"/>
        <dbReference type="ChEBI" id="CHEBI:58053"/>
        <dbReference type="ChEBI" id="CHEBI:58189"/>
        <dbReference type="EC" id="6.3.4.4"/>
    </reaction>
</comment>
<comment type="cofactor">
    <cofactor evidence="1">
        <name>Mg(2+)</name>
        <dbReference type="ChEBI" id="CHEBI:18420"/>
    </cofactor>
    <text evidence="1">Binds 1 Mg(2+) ion per subunit.</text>
</comment>
<comment type="pathway">
    <text evidence="1">Purine metabolism; AMP biosynthesis via de novo pathway; AMP from IMP: step 1/2.</text>
</comment>
<comment type="subunit">
    <text evidence="1">Homodimer.</text>
</comment>
<comment type="subcellular location">
    <subcellularLocation>
        <location evidence="1">Cytoplasm</location>
    </subcellularLocation>
</comment>
<comment type="similarity">
    <text evidence="1">Belongs to the adenylosuccinate synthetase family.</text>
</comment>